<feature type="chain" id="PRO_0000105480" description="DNA polymerase III subunit epsilon">
    <location>
        <begin position="1"/>
        <end position="237"/>
    </location>
</feature>
<feature type="active site" description="Proton acceptor" evidence="1">
    <location>
        <position position="159"/>
    </location>
</feature>
<feature type="binding site" evidence="1">
    <location>
        <position position="10"/>
    </location>
    <ligand>
        <name>a divalent metal cation</name>
        <dbReference type="ChEBI" id="CHEBI:60240"/>
        <label>1</label>
        <note>catalytic</note>
    </ligand>
</feature>
<feature type="binding site" evidence="1">
    <location>
        <position position="10"/>
    </location>
    <ligand>
        <name>a divalent metal cation</name>
        <dbReference type="ChEBI" id="CHEBI:60240"/>
        <label>2</label>
        <note>catalytic</note>
    </ligand>
</feature>
<feature type="binding site" evidence="1">
    <location>
        <position position="10"/>
    </location>
    <ligand>
        <name>substrate</name>
    </ligand>
</feature>
<feature type="binding site" evidence="1">
    <location>
        <position position="12"/>
    </location>
    <ligand>
        <name>a divalent metal cation</name>
        <dbReference type="ChEBI" id="CHEBI:60240"/>
        <label>1</label>
        <note>catalytic</note>
    </ligand>
</feature>
<feature type="binding site" evidence="1">
    <location>
        <position position="12"/>
    </location>
    <ligand>
        <name>substrate</name>
    </ligand>
</feature>
<feature type="binding site" evidence="1">
    <location>
        <position position="64"/>
    </location>
    <ligand>
        <name>substrate</name>
    </ligand>
</feature>
<feature type="binding site" evidence="1">
    <location>
        <position position="164"/>
    </location>
    <ligand>
        <name>a divalent metal cation</name>
        <dbReference type="ChEBI" id="CHEBI:60240"/>
        <label>1</label>
        <note>catalytic</note>
    </ligand>
</feature>
<feature type="binding site" evidence="1">
    <location>
        <position position="164"/>
    </location>
    <ligand>
        <name>substrate</name>
    </ligand>
</feature>
<name>DPO3E_BUCAI</name>
<reference key="1">
    <citation type="journal article" date="2000" name="Nature">
        <title>Genome sequence of the endocellular bacterial symbiont of aphids Buchnera sp. APS.</title>
        <authorList>
            <person name="Shigenobu S."/>
            <person name="Watanabe H."/>
            <person name="Hattori M."/>
            <person name="Sakaki Y."/>
            <person name="Ishikawa H."/>
        </authorList>
    </citation>
    <scope>NUCLEOTIDE SEQUENCE [LARGE SCALE GENOMIC DNA]</scope>
    <source>
        <strain>APS</strain>
    </source>
</reference>
<proteinExistence type="inferred from homology"/>
<comment type="function">
    <text evidence="1">DNA polymerase III is a complex, multichain enzyme responsible for most of the replicative synthesis in bacteria. The epsilon subunit contain the editing function and is a proofreading 3'-5' exonuclease (By similarity).</text>
</comment>
<comment type="catalytic activity">
    <reaction>
        <text>DNA(n) + a 2'-deoxyribonucleoside 5'-triphosphate = DNA(n+1) + diphosphate</text>
        <dbReference type="Rhea" id="RHEA:22508"/>
        <dbReference type="Rhea" id="RHEA-COMP:17339"/>
        <dbReference type="Rhea" id="RHEA-COMP:17340"/>
        <dbReference type="ChEBI" id="CHEBI:33019"/>
        <dbReference type="ChEBI" id="CHEBI:61560"/>
        <dbReference type="ChEBI" id="CHEBI:173112"/>
        <dbReference type="EC" id="2.7.7.7"/>
    </reaction>
</comment>
<comment type="cofactor">
    <cofactor evidence="1">
        <name>Mg(2+)</name>
        <dbReference type="ChEBI" id="CHEBI:18420"/>
    </cofactor>
    <cofactor evidence="1">
        <name>Mn(2+)</name>
        <dbReference type="ChEBI" id="CHEBI:29035"/>
    </cofactor>
    <text evidence="1">Binds 2 divalent metal cations. Magnesium or manganese.</text>
</comment>
<comment type="subunit">
    <text evidence="1">The DNA polymerase holoenzyme is a complex that contains 10 different types of subunits. These subunits are organized into 3 functionally essential subassemblies: the pol III core, the beta sliding clamp processivity factor and the clamp-loading complex. The pol III core (subunits alpha,epsilon and theta) contains the polymerase and the 3'-5' exonuclease proofreading activities. The polymerase is tethered to the template via the sliding clamp processivity factor. The clamp-loading complex assembles the beta processivity factor onto the primer template and plays a central role in the organization and communication at the replication fork. This complex contains delta, delta', psi and chi, and copies of either or both of two different DnaX proteins, gamma and tau. The composition of the holoenzyme is, therefore: (alpha,epsilon,theta)[2]-(gamma/tau)[3]-delta,delta', psi,chi-beta[4] (By similarity).</text>
</comment>
<organism>
    <name type="scientific">Buchnera aphidicola subsp. Acyrthosiphon pisum (strain APS)</name>
    <name type="common">Acyrthosiphon pisum symbiotic bacterium</name>
    <dbReference type="NCBI Taxonomy" id="107806"/>
    <lineage>
        <taxon>Bacteria</taxon>
        <taxon>Pseudomonadati</taxon>
        <taxon>Pseudomonadota</taxon>
        <taxon>Gammaproteobacteria</taxon>
        <taxon>Enterobacterales</taxon>
        <taxon>Erwiniaceae</taxon>
        <taxon>Buchnera</taxon>
    </lineage>
</organism>
<protein>
    <recommendedName>
        <fullName>DNA polymerase III subunit epsilon</fullName>
        <ecNumber>2.7.7.7</ecNumber>
    </recommendedName>
</protein>
<gene>
    <name type="primary">dnaQ</name>
    <name type="ordered locus">BU248</name>
</gene>
<sequence length="237" mass="27365">MNRKRTIILDTETTGINQTSLPHINHRIIEIGAVEIIDRCFTGNNFHVYIQPGRSIESGALKVHGITNKFLLDKPIFKDIADSFLNYIKNSILVIHNASFDVGFINQELEILNKKIKINTFCSIIDTLKIARELFPGKKNTLDALCTRYKINKSHRNLHSAIVDSYLLGKLYLLMTGGQDSLFSDNTINYKENFKKLKKNIQLKNNTLRILHPTLKENDLHEKYLQYMKDKSTCLWN</sequence>
<dbReference type="EC" id="2.7.7.7"/>
<dbReference type="EMBL" id="BA000003">
    <property type="protein sequence ID" value="BAB12959.1"/>
    <property type="molecule type" value="Genomic_DNA"/>
</dbReference>
<dbReference type="RefSeq" id="NP_240073.1">
    <property type="nucleotide sequence ID" value="NC_002528.1"/>
</dbReference>
<dbReference type="RefSeq" id="WP_010896025.1">
    <property type="nucleotide sequence ID" value="NC_002528.1"/>
</dbReference>
<dbReference type="SMR" id="P57337"/>
<dbReference type="STRING" id="563178.BUAP5A_243"/>
<dbReference type="EnsemblBacteria" id="BAB12959">
    <property type="protein sequence ID" value="BAB12959"/>
    <property type="gene ID" value="BAB12959"/>
</dbReference>
<dbReference type="KEGG" id="buc:BU248"/>
<dbReference type="PATRIC" id="fig|107806.10.peg.259"/>
<dbReference type="eggNOG" id="COG0847">
    <property type="taxonomic scope" value="Bacteria"/>
</dbReference>
<dbReference type="HOGENOM" id="CLU_047806_2_0_6"/>
<dbReference type="Proteomes" id="UP000001806">
    <property type="component" value="Chromosome"/>
</dbReference>
<dbReference type="GO" id="GO:0005829">
    <property type="term" value="C:cytosol"/>
    <property type="evidence" value="ECO:0007669"/>
    <property type="project" value="TreeGrafter"/>
</dbReference>
<dbReference type="GO" id="GO:0008408">
    <property type="term" value="F:3'-5' exonuclease activity"/>
    <property type="evidence" value="ECO:0007669"/>
    <property type="project" value="TreeGrafter"/>
</dbReference>
<dbReference type="GO" id="GO:0003677">
    <property type="term" value="F:DNA binding"/>
    <property type="evidence" value="ECO:0007669"/>
    <property type="project" value="InterPro"/>
</dbReference>
<dbReference type="GO" id="GO:0003887">
    <property type="term" value="F:DNA-directed DNA polymerase activity"/>
    <property type="evidence" value="ECO:0007669"/>
    <property type="project" value="UniProtKB-KW"/>
</dbReference>
<dbReference type="GO" id="GO:0046872">
    <property type="term" value="F:metal ion binding"/>
    <property type="evidence" value="ECO:0007669"/>
    <property type="project" value="UniProtKB-KW"/>
</dbReference>
<dbReference type="GO" id="GO:0045004">
    <property type="term" value="P:DNA replication proofreading"/>
    <property type="evidence" value="ECO:0007669"/>
    <property type="project" value="TreeGrafter"/>
</dbReference>
<dbReference type="CDD" id="cd06131">
    <property type="entry name" value="DNA_pol_III_epsilon_Ecoli_like"/>
    <property type="match status" value="1"/>
</dbReference>
<dbReference type="FunFam" id="3.30.420.10:FF:000012">
    <property type="entry name" value="DNA polymerase III subunit epsilon"/>
    <property type="match status" value="1"/>
</dbReference>
<dbReference type="Gene3D" id="3.30.420.10">
    <property type="entry name" value="Ribonuclease H-like superfamily/Ribonuclease H"/>
    <property type="match status" value="1"/>
</dbReference>
<dbReference type="InterPro" id="IPR006054">
    <property type="entry name" value="DnaQ"/>
</dbReference>
<dbReference type="InterPro" id="IPR006309">
    <property type="entry name" value="DnaQ_proteo"/>
</dbReference>
<dbReference type="InterPro" id="IPR013520">
    <property type="entry name" value="Exonuclease_RNaseT/DNA_pol3"/>
</dbReference>
<dbReference type="InterPro" id="IPR012337">
    <property type="entry name" value="RNaseH-like_sf"/>
</dbReference>
<dbReference type="InterPro" id="IPR036397">
    <property type="entry name" value="RNaseH_sf"/>
</dbReference>
<dbReference type="NCBIfam" id="TIGR00573">
    <property type="entry name" value="dnaq"/>
    <property type="match status" value="1"/>
</dbReference>
<dbReference type="NCBIfam" id="TIGR01406">
    <property type="entry name" value="dnaQ_proteo"/>
    <property type="match status" value="1"/>
</dbReference>
<dbReference type="NCBIfam" id="NF004316">
    <property type="entry name" value="PRK05711.1"/>
    <property type="match status" value="1"/>
</dbReference>
<dbReference type="PANTHER" id="PTHR30231">
    <property type="entry name" value="DNA POLYMERASE III SUBUNIT EPSILON"/>
    <property type="match status" value="1"/>
</dbReference>
<dbReference type="PANTHER" id="PTHR30231:SF41">
    <property type="entry name" value="DNA POLYMERASE III SUBUNIT EPSILON"/>
    <property type="match status" value="1"/>
</dbReference>
<dbReference type="Pfam" id="PF00929">
    <property type="entry name" value="RNase_T"/>
    <property type="match status" value="1"/>
</dbReference>
<dbReference type="SMART" id="SM00479">
    <property type="entry name" value="EXOIII"/>
    <property type="match status" value="1"/>
</dbReference>
<dbReference type="SUPFAM" id="SSF53098">
    <property type="entry name" value="Ribonuclease H-like"/>
    <property type="match status" value="1"/>
</dbReference>
<accession>P57337</accession>
<evidence type="ECO:0000250" key="1"/>
<keyword id="KW-0235">DNA replication</keyword>
<keyword id="KW-0239">DNA-directed DNA polymerase</keyword>
<keyword id="KW-0269">Exonuclease</keyword>
<keyword id="KW-0378">Hydrolase</keyword>
<keyword id="KW-0460">Magnesium</keyword>
<keyword id="KW-0464">Manganese</keyword>
<keyword id="KW-0479">Metal-binding</keyword>
<keyword id="KW-0540">Nuclease</keyword>
<keyword id="KW-0548">Nucleotidyltransferase</keyword>
<keyword id="KW-1185">Reference proteome</keyword>
<keyword id="KW-0808">Transferase</keyword>